<reference key="1">
    <citation type="journal article" date="2008" name="Genome Res.">
        <title>Insights from the complete genome sequence of Mycobacterium marinum on the evolution of Mycobacterium tuberculosis.</title>
        <authorList>
            <person name="Stinear T.P."/>
            <person name="Seemann T."/>
            <person name="Harrison P.F."/>
            <person name="Jenkin G.A."/>
            <person name="Davies J.K."/>
            <person name="Johnson P.D."/>
            <person name="Abdellah Z."/>
            <person name="Arrowsmith C."/>
            <person name="Chillingworth T."/>
            <person name="Churcher C."/>
            <person name="Clarke K."/>
            <person name="Cronin A."/>
            <person name="Davis P."/>
            <person name="Goodhead I."/>
            <person name="Holroyd N."/>
            <person name="Jagels K."/>
            <person name="Lord A."/>
            <person name="Moule S."/>
            <person name="Mungall K."/>
            <person name="Norbertczak H."/>
            <person name="Quail M.A."/>
            <person name="Rabbinowitsch E."/>
            <person name="Walker D."/>
            <person name="White B."/>
            <person name="Whitehead S."/>
            <person name="Small P.L."/>
            <person name="Brosch R."/>
            <person name="Ramakrishnan L."/>
            <person name="Fischbach M.A."/>
            <person name="Parkhill J."/>
            <person name="Cole S.T."/>
        </authorList>
    </citation>
    <scope>NUCLEOTIDE SEQUENCE [LARGE SCALE GENOMIC DNA]</scope>
    <source>
        <strain>ATCC BAA-535 / M</strain>
    </source>
</reference>
<reference key="2">
    <citation type="journal article" date="2012" name="J. Biol. Chem.">
        <title>Specific chaperones for the type VII protein secretion pathway.</title>
        <authorList>
            <person name="Daleke M.H."/>
            <person name="van der Woude A.D."/>
            <person name="Parret A.H."/>
            <person name="Ummels R."/>
            <person name="de Groot A.M."/>
            <person name="Watson D."/>
            <person name="Piersma S.R."/>
            <person name="Jimenez C.R."/>
            <person name="Luirink J."/>
            <person name="Bitter W."/>
            <person name="Houben E.N."/>
        </authorList>
    </citation>
    <scope>FUNCTION</scope>
    <scope>INTERACTION WITH PPE33</scope>
    <scope>SUBUNIT</scope>
    <scope>SUBCELLULAR LOCATION</scope>
    <source>
        <strain>E11</strain>
    </source>
</reference>
<reference key="3">
    <citation type="journal article" date="2012" name="Mol. Microbiol.">
        <title>Composition of the type VII secretion system membrane complex.</title>
        <authorList>
            <person name="Houben E.N."/>
            <person name="Bestebroer J."/>
            <person name="Ummels R."/>
            <person name="Wilson L."/>
            <person name="Piersma S.R."/>
            <person name="Jimenez C.R."/>
            <person name="Ottenhoff T.H."/>
            <person name="Luirink J."/>
            <person name="Bitter W."/>
        </authorList>
    </citation>
    <scope>SUBCELLULAR LOCATION</scope>
    <source>
        <strain>ATCC BAA-535 / M</strain>
    </source>
</reference>
<protein>
    <recommendedName>
        <fullName evidence="4">ESX-5 secretion-associated protein EspG5</fullName>
    </recommendedName>
</protein>
<feature type="chain" id="PRO_0000435130" description="ESX-5 secretion-associated protein EspG5">
    <location>
        <begin position="1"/>
        <end position="300"/>
    </location>
</feature>
<feature type="strand" evidence="6">
    <location>
        <begin position="10"/>
        <end position="13"/>
    </location>
</feature>
<feature type="helix" evidence="6">
    <location>
        <begin position="14"/>
        <end position="23"/>
    </location>
</feature>
<feature type="helix" evidence="6">
    <location>
        <begin position="31"/>
        <end position="33"/>
    </location>
</feature>
<feature type="helix" evidence="6">
    <location>
        <begin position="45"/>
        <end position="49"/>
    </location>
</feature>
<feature type="helix" evidence="6">
    <location>
        <begin position="51"/>
        <end position="58"/>
    </location>
</feature>
<feature type="strand" evidence="6">
    <location>
        <begin position="61"/>
        <end position="63"/>
    </location>
</feature>
<feature type="helix" evidence="6">
    <location>
        <begin position="69"/>
        <end position="79"/>
    </location>
</feature>
<feature type="strand" evidence="6">
    <location>
        <begin position="82"/>
        <end position="93"/>
    </location>
</feature>
<feature type="strand" evidence="6">
    <location>
        <begin position="115"/>
        <end position="123"/>
    </location>
</feature>
<feature type="strand" evidence="6">
    <location>
        <begin position="126"/>
        <end position="133"/>
    </location>
</feature>
<feature type="strand" evidence="6">
    <location>
        <begin position="136"/>
        <end position="141"/>
    </location>
</feature>
<feature type="helix" evidence="6">
    <location>
        <begin position="147"/>
        <end position="159"/>
    </location>
</feature>
<feature type="strand" evidence="6">
    <location>
        <begin position="172"/>
        <end position="175"/>
    </location>
</feature>
<feature type="helix" evidence="6">
    <location>
        <begin position="176"/>
        <end position="188"/>
    </location>
</feature>
<feature type="helix" evidence="6">
    <location>
        <begin position="197"/>
        <end position="200"/>
    </location>
</feature>
<feature type="turn" evidence="6">
    <location>
        <begin position="201"/>
        <end position="203"/>
    </location>
</feature>
<feature type="helix" evidence="6">
    <location>
        <begin position="206"/>
        <end position="217"/>
    </location>
</feature>
<feature type="strand" evidence="6">
    <location>
        <begin position="220"/>
        <end position="231"/>
    </location>
</feature>
<feature type="strand" evidence="6">
    <location>
        <begin position="234"/>
        <end position="237"/>
    </location>
</feature>
<feature type="strand" evidence="6">
    <location>
        <begin position="242"/>
        <end position="247"/>
    </location>
</feature>
<feature type="strand" evidence="6">
    <location>
        <begin position="250"/>
        <end position="256"/>
    </location>
</feature>
<feature type="strand" evidence="6">
    <location>
        <begin position="267"/>
        <end position="272"/>
    </location>
</feature>
<feature type="helix" evidence="6">
    <location>
        <begin position="275"/>
        <end position="286"/>
    </location>
</feature>
<feature type="strand" evidence="6">
    <location>
        <begin position="294"/>
        <end position="296"/>
    </location>
</feature>
<comment type="function">
    <text evidence="1">Specific chaperone for cognate PE/PPE proteins. Plays an important role in preventing aggregation of PE/PPE dimers. Required for LipY and PE31/PPE18 secretion.</text>
</comment>
<comment type="subunit">
    <text evidence="1">Interacts specifically with ESX-5-dependent PE/PPE proteins. Binds PPE33 and PPE18. Does not interact with EsxN. Monomer in solution.</text>
</comment>
<comment type="subcellular location">
    <subcellularLocation>
        <location evidence="1 2">Cytoplasm</location>
    </subcellularLocation>
</comment>
<comment type="similarity">
    <text evidence="4">Belongs to the EspG family.</text>
</comment>
<accession>B2HSU5</accession>
<name>ESPG5_MYCMM</name>
<evidence type="ECO:0000269" key="1">
    <source>
    </source>
</evidence>
<evidence type="ECO:0000269" key="2">
    <source>
    </source>
</evidence>
<evidence type="ECO:0000303" key="3">
    <source>
    </source>
</evidence>
<evidence type="ECO:0000305" key="4"/>
<evidence type="ECO:0000312" key="5">
    <source>
        <dbReference type="EMBL" id="ACC41119.1"/>
    </source>
</evidence>
<evidence type="ECO:0007829" key="6">
    <source>
        <dbReference type="PDB" id="6VJ5"/>
    </source>
</evidence>
<dbReference type="EMBL" id="CP000854">
    <property type="protein sequence ID" value="ACC41119.1"/>
    <property type="molecule type" value="Genomic_DNA"/>
</dbReference>
<dbReference type="RefSeq" id="WP_012394390.1">
    <property type="nucleotide sequence ID" value="NC_010612.1"/>
</dbReference>
<dbReference type="PDB" id="6VJ5">
    <property type="method" value="X-ray"/>
    <property type="resolution" value="2.40 A"/>
    <property type="chains" value="C=1-300"/>
</dbReference>
<dbReference type="PDBsum" id="6VJ5"/>
<dbReference type="SMR" id="B2HSU5"/>
<dbReference type="STRING" id="216594.MMAR_2676"/>
<dbReference type="GeneID" id="34343498"/>
<dbReference type="KEGG" id="mmi:MMAR_2676"/>
<dbReference type="eggNOG" id="ENOG5031DB5">
    <property type="taxonomic scope" value="Bacteria"/>
</dbReference>
<dbReference type="HOGENOM" id="CLU_908572_0_0_11"/>
<dbReference type="OrthoDB" id="4743002at2"/>
<dbReference type="PHI-base" id="PHI:3602"/>
<dbReference type="Proteomes" id="UP000001190">
    <property type="component" value="Chromosome"/>
</dbReference>
<dbReference type="GO" id="GO:0005737">
    <property type="term" value="C:cytoplasm"/>
    <property type="evidence" value="ECO:0007669"/>
    <property type="project" value="UniProtKB-SubCell"/>
</dbReference>
<dbReference type="InterPro" id="IPR025734">
    <property type="entry name" value="EspG"/>
</dbReference>
<dbReference type="Pfam" id="PF14011">
    <property type="entry name" value="ESX-1_EspG"/>
    <property type="match status" value="1"/>
</dbReference>
<sequence>MDQQSTRTDITVNVDGFWMLQALLDIRHVAPELRCRPYVSTDSNDWLNEHPGMAVMREQGIVVGDTVNEQVAARMRVLAAPDLEVVALLSRGKLLYGVVDNEDQPPGSRDIPDNEFRVVLARRGQHWVSAVRVGNDITVDDVSVSDSASIAALVIDGLESIHHADPAAINAVNVPLEEMLEATKSWQESGFNVFSGGDLRRMGISASTVAALGQALSDPAAEVAVYARQYRDDAKGPSASVLSLKDGSGGRIALYQQARTAGSGEAWLAICPATPQLVQVGVKTVLDTLPYGEWKTHSRV</sequence>
<keyword id="KW-0002">3D-structure</keyword>
<keyword id="KW-0143">Chaperone</keyword>
<keyword id="KW-0963">Cytoplasm</keyword>
<keyword id="KW-1185">Reference proteome</keyword>
<gene>
    <name evidence="3" type="primary">espG5</name>
    <name evidence="5" type="ordered locus">MMAR_2676</name>
</gene>
<organism>
    <name type="scientific">Mycobacterium marinum (strain ATCC BAA-535 / M)</name>
    <dbReference type="NCBI Taxonomy" id="216594"/>
    <lineage>
        <taxon>Bacteria</taxon>
        <taxon>Bacillati</taxon>
        <taxon>Actinomycetota</taxon>
        <taxon>Actinomycetes</taxon>
        <taxon>Mycobacteriales</taxon>
        <taxon>Mycobacteriaceae</taxon>
        <taxon>Mycobacterium</taxon>
        <taxon>Mycobacterium ulcerans group</taxon>
    </lineage>
</organism>
<proteinExistence type="evidence at protein level"/>